<comment type="function">
    <text evidence="1">Toxic component of a type II toxin-antitoxin (TA) system. Processes pre-16S-rRNA at its 3' end (the D-site) to yield the mature 3' end (By similarity).</text>
</comment>
<comment type="cofactor">
    <cofactor evidence="4">
        <name>Mn(2+)</name>
        <dbReference type="ChEBI" id="CHEBI:29035"/>
    </cofactor>
</comment>
<comment type="cofactor">
    <cofactor evidence="1">
        <name>Zn(2+)</name>
        <dbReference type="ChEBI" id="CHEBI:29105"/>
    </cofactor>
    <text evidence="1">Binds 1 zinc ion per subunit.</text>
</comment>
<comment type="domain">
    <text evidence="1">Has 2 structurally independent domains; the N-terminal PINc domain which binds Mn(2+), rRNA substrate and probably has endoribonuclease activity, and the C-terminal zinc ribbon domain which also binds rRNA substrate.</text>
</comment>
<comment type="similarity">
    <text evidence="3">Belongs to the PINc/VapC protein family.</text>
</comment>
<dbReference type="EC" id="3.1.-.-" evidence="3"/>
<dbReference type="EMBL" id="AJ248287">
    <property type="protein sequence ID" value="CAB50242.1"/>
    <property type="molecule type" value="Genomic_DNA"/>
</dbReference>
<dbReference type="EMBL" id="HE613800">
    <property type="protein sequence ID" value="CCE70779.1"/>
    <property type="molecule type" value="Genomic_DNA"/>
</dbReference>
<dbReference type="PIR" id="E75043">
    <property type="entry name" value="E75043"/>
</dbReference>
<dbReference type="RefSeq" id="WP_010868452.1">
    <property type="nucleotide sequence ID" value="NC_000868.1"/>
</dbReference>
<dbReference type="SMR" id="Q9UZ20"/>
<dbReference type="STRING" id="272844.PAB0882"/>
<dbReference type="KEGG" id="pab:PAB0882"/>
<dbReference type="PATRIC" id="fig|272844.11.peg.1422"/>
<dbReference type="eggNOG" id="arCOG00721">
    <property type="taxonomic scope" value="Archaea"/>
</dbReference>
<dbReference type="HOGENOM" id="CLU_109674_1_0_2"/>
<dbReference type="OrthoDB" id="27944at2157"/>
<dbReference type="PhylomeDB" id="Q9UZ20"/>
<dbReference type="Proteomes" id="UP000000810">
    <property type="component" value="Chromosome"/>
</dbReference>
<dbReference type="Proteomes" id="UP000009139">
    <property type="component" value="Chromosome"/>
</dbReference>
<dbReference type="GO" id="GO:0030688">
    <property type="term" value="C:preribosome, small subunit precursor"/>
    <property type="evidence" value="ECO:0007669"/>
    <property type="project" value="TreeGrafter"/>
</dbReference>
<dbReference type="GO" id="GO:0000287">
    <property type="term" value="F:magnesium ion binding"/>
    <property type="evidence" value="ECO:0007669"/>
    <property type="project" value="UniProtKB-UniRule"/>
</dbReference>
<dbReference type="GO" id="GO:0004521">
    <property type="term" value="F:RNA endonuclease activity"/>
    <property type="evidence" value="ECO:0007669"/>
    <property type="project" value="TreeGrafter"/>
</dbReference>
<dbReference type="GO" id="GO:0019843">
    <property type="term" value="F:rRNA binding"/>
    <property type="evidence" value="ECO:0007669"/>
    <property type="project" value="UniProtKB-KW"/>
</dbReference>
<dbReference type="GO" id="GO:0030490">
    <property type="term" value="P:maturation of SSU-rRNA"/>
    <property type="evidence" value="ECO:0007669"/>
    <property type="project" value="TreeGrafter"/>
</dbReference>
<dbReference type="CDD" id="cd09876">
    <property type="entry name" value="PIN_Nob1-like"/>
    <property type="match status" value="1"/>
</dbReference>
<dbReference type="FunFam" id="3.40.50.1010:FF:000020">
    <property type="entry name" value="20S-pre-rRNA D-site endonuclease NOB1"/>
    <property type="match status" value="1"/>
</dbReference>
<dbReference type="FunFam" id="2.20.28.10:FF:000024">
    <property type="entry name" value="rRNA maturation endonuclease Nob1"/>
    <property type="match status" value="1"/>
</dbReference>
<dbReference type="Gene3D" id="2.20.28.10">
    <property type="match status" value="1"/>
</dbReference>
<dbReference type="Gene3D" id="3.40.50.1010">
    <property type="entry name" value="5'-nuclease"/>
    <property type="match status" value="1"/>
</dbReference>
<dbReference type="HAMAP" id="MF_00265">
    <property type="entry name" value="VapC_Nob1"/>
    <property type="match status" value="1"/>
</dbReference>
<dbReference type="InterPro" id="IPR039907">
    <property type="entry name" value="NOB1"/>
</dbReference>
<dbReference type="InterPro" id="IPR029060">
    <property type="entry name" value="PIN-like_dom_sf"/>
</dbReference>
<dbReference type="InterPro" id="IPR002716">
    <property type="entry name" value="PIN_dom"/>
</dbReference>
<dbReference type="InterPro" id="IPR033411">
    <property type="entry name" value="Ribonuclease_PIN"/>
</dbReference>
<dbReference type="InterPro" id="IPR022907">
    <property type="entry name" value="VapC_family"/>
</dbReference>
<dbReference type="NCBIfam" id="NF009146">
    <property type="entry name" value="PRK12496.1-3"/>
    <property type="match status" value="1"/>
</dbReference>
<dbReference type="PANTHER" id="PTHR12814">
    <property type="entry name" value="RNA-BINDING PROTEIN NOB1"/>
    <property type="match status" value="1"/>
</dbReference>
<dbReference type="PANTHER" id="PTHR12814:SF2">
    <property type="entry name" value="RNA-BINDING PROTEIN NOB1"/>
    <property type="match status" value="1"/>
</dbReference>
<dbReference type="Pfam" id="PF17146">
    <property type="entry name" value="PIN_6"/>
    <property type="match status" value="1"/>
</dbReference>
<dbReference type="SMART" id="SM00670">
    <property type="entry name" value="PINc"/>
    <property type="match status" value="1"/>
</dbReference>
<dbReference type="SUPFAM" id="SSF88723">
    <property type="entry name" value="PIN domain-like"/>
    <property type="match status" value="1"/>
</dbReference>
<evidence type="ECO:0000250" key="1"/>
<evidence type="ECO:0000255" key="2"/>
<evidence type="ECO:0000255" key="3">
    <source>
        <dbReference type="HAMAP-Rule" id="MF_00265"/>
    </source>
</evidence>
<evidence type="ECO:0000305" key="4"/>
<name>NOB1_PYRAB</name>
<organism>
    <name type="scientific">Pyrococcus abyssi (strain GE5 / Orsay)</name>
    <dbReference type="NCBI Taxonomy" id="272844"/>
    <lineage>
        <taxon>Archaea</taxon>
        <taxon>Methanobacteriati</taxon>
        <taxon>Methanobacteriota</taxon>
        <taxon>Thermococci</taxon>
        <taxon>Thermococcales</taxon>
        <taxon>Thermococcaceae</taxon>
        <taxon>Pyrococcus</taxon>
    </lineage>
</organism>
<proteinExistence type="inferred from homology"/>
<reference key="1">
    <citation type="journal article" date="2003" name="Mol. Microbiol.">
        <title>An integrated analysis of the genome of the hyperthermophilic archaeon Pyrococcus abyssi.</title>
        <authorList>
            <person name="Cohen G.N."/>
            <person name="Barbe V."/>
            <person name="Flament D."/>
            <person name="Galperin M."/>
            <person name="Heilig R."/>
            <person name="Lecompte O."/>
            <person name="Poch O."/>
            <person name="Prieur D."/>
            <person name="Querellou J."/>
            <person name="Ripp R."/>
            <person name="Thierry J.-C."/>
            <person name="Van der Oost J."/>
            <person name="Weissenbach J."/>
            <person name="Zivanovic Y."/>
            <person name="Forterre P."/>
        </authorList>
    </citation>
    <scope>NUCLEOTIDE SEQUENCE [LARGE SCALE GENOMIC DNA]</scope>
    <source>
        <strain>GE5 / Orsay</strain>
    </source>
</reference>
<reference key="2">
    <citation type="journal article" date="2012" name="Curr. Microbiol.">
        <title>Re-annotation of two hyperthermophilic archaea Pyrococcus abyssi GE5 and Pyrococcus furiosus DSM 3638.</title>
        <authorList>
            <person name="Gao J."/>
            <person name="Wang J."/>
        </authorList>
    </citation>
    <scope>GENOME REANNOTATION</scope>
    <source>
        <strain>GE5 / Orsay</strain>
    </source>
</reference>
<reference key="3">
    <citation type="journal article" date="2005" name="Nucleic Acids Res.">
        <title>Toxin-antitoxin loci are highly abundant in free-living but lost from host-associated prokaryotes.</title>
        <authorList>
            <person name="Pandey D.P."/>
            <person name="Gerdes K."/>
        </authorList>
    </citation>
    <scope>POSSIBLE FUNCTION</scope>
    <source>
        <strain>GE5 / Orsay</strain>
    </source>
</reference>
<accession>Q9UZ20</accession>
<accession>G8ZHE2</accession>
<gene>
    <name type="primary">nob1</name>
    <name type="synonym">vapC14</name>
    <name type="ordered locus">PYRAB13370</name>
    <name type="ORF">PAB0882</name>
</gene>
<keyword id="KW-0255">Endonuclease</keyword>
<keyword id="KW-0378">Hydrolase</keyword>
<keyword id="KW-0464">Manganese</keyword>
<keyword id="KW-0479">Metal-binding</keyword>
<keyword id="KW-0540">Nuclease</keyword>
<keyword id="KW-0690">Ribosome biogenesis</keyword>
<keyword id="KW-0694">RNA-binding</keyword>
<keyword id="KW-0699">rRNA-binding</keyword>
<keyword id="KW-1277">Toxin-antitoxin system</keyword>
<keyword id="KW-0862">Zinc</keyword>
<protein>
    <recommendedName>
        <fullName>Endoribonuclease Nob1</fullName>
        <shortName>RNase Nob1</shortName>
        <ecNumber evidence="3">3.1.-.-</ecNumber>
    </recommendedName>
    <alternativeName>
        <fullName>Endonuclease VapC14</fullName>
    </alternativeName>
    <alternativeName>
        <fullName evidence="3">Putative toxin VapC14</fullName>
    </alternativeName>
</protein>
<sequence length="161" mass="17976">MLLKLKLVLDSSVFIQGLDIEGYTTPKVVDEVKDRESRILLESLISSGKVKVVEPSKEALRAVKNAALKTGEIEELSEADLEVLALAYELKAEVFSDDYNVQNVARILGLKFRTLKRGIKKVIKWQYVCIGCGRKFKEMPPGGICPDCGSPVKLIPRRQRS</sequence>
<feature type="chain" id="PRO_0000156047" description="Endoribonuclease Nob1">
    <location>
        <begin position="1"/>
        <end position="161"/>
    </location>
</feature>
<feature type="domain" description="PINc" evidence="3">
    <location>
        <begin position="5"/>
        <end position="103"/>
    </location>
</feature>
<feature type="region of interest" description="Flexible linker" evidence="1">
    <location>
        <begin position="118"/>
        <end position="123"/>
    </location>
</feature>
<feature type="region of interest" description="Zinc ribbon" evidence="1">
    <location>
        <begin position="124"/>
        <end position="159"/>
    </location>
</feature>
<feature type="binding site" evidence="2">
    <location>
        <position position="10"/>
    </location>
    <ligand>
        <name>Mn(2+)</name>
        <dbReference type="ChEBI" id="CHEBI:29035"/>
    </ligand>
</feature>
<feature type="binding site" evidence="1">
    <location>
        <position position="129"/>
    </location>
    <ligand>
        <name>Zn(2+)</name>
        <dbReference type="ChEBI" id="CHEBI:29105"/>
    </ligand>
</feature>
<feature type="binding site" evidence="1">
    <location>
        <position position="132"/>
    </location>
    <ligand>
        <name>Zn(2+)</name>
        <dbReference type="ChEBI" id="CHEBI:29105"/>
    </ligand>
</feature>
<feature type="binding site" evidence="1">
    <location>
        <position position="145"/>
    </location>
    <ligand>
        <name>Zn(2+)</name>
        <dbReference type="ChEBI" id="CHEBI:29105"/>
    </ligand>
</feature>
<feature type="binding site" evidence="1">
    <location>
        <position position="148"/>
    </location>
    <ligand>
        <name>Zn(2+)</name>
        <dbReference type="ChEBI" id="CHEBI:29105"/>
    </ligand>
</feature>